<accession>Q16739</accession>
<accession>Q5T258</accession>
<comment type="function">
    <text evidence="2 6 7 8 11">Participates in the initial step of the glucosylceramide-based glycosphingolipid/GSL synthetic pathway at the cytosolic surface of the Golgi (PubMed:1532799, PubMed:8643456). Catalyzes the transfer of glucose from UDP-glucose to ceramide to produce glucosylceramide/GlcCer (such as beta-D-glucosyl-(1&lt;-&gt;1')-N-acylsphing-4-enine) (PubMed:1532799, PubMed:8643456). GlcCer is the core component of glycosphingolipids/GSLs, amphipathic molecules consisting of a ceramide lipid moiety embedded in the outer leaflet of the membrane, linked to one of hundreds of different externally oriented oligosaccharide structures (PubMed:8643456). Glycosphingolipids are essential components of membrane microdomains that mediate membrane trafficking and signal transduction, implicated in many fundamental cellular processes, including growth, differentiation, migration, morphogenesis, cell-to-cell and cell-to-matrix interactions (By similarity). They are required for instance in the proper development and functioning of the nervous system (By similarity). As an example of their role in signal transduction, they regulate the leptin receptor/LEPR in the leptin-mediated signaling pathway (By similarity). They also play an important role in the establishment of the skin barrier regulating keratinocyte differentiation and the proper assembly of the cornified envelope (By similarity). The biosynthesis of GSLs is also required for the proper intestinal endocytic uptake of nutritional lipids (By similarity). Catalyzes the synthesis of xylosylceramide/XylCer (such as beta-D-xylosyl-(1&lt;-&gt;1')-N-acylsphing-4-enine) using UDP-Xyl as xylose donor (PubMed:33361282).</text>
</comment>
<comment type="catalytic activity">
    <reaction evidence="8">
        <text>an N-acylsphing-4-enine + UDP-alpha-D-glucose = a beta-D-glucosyl-(1&lt;-&gt;1')-N-acylsphing-4-enine + UDP + H(+)</text>
        <dbReference type="Rhea" id="RHEA:12088"/>
        <dbReference type="ChEBI" id="CHEBI:15378"/>
        <dbReference type="ChEBI" id="CHEBI:22801"/>
        <dbReference type="ChEBI" id="CHEBI:52639"/>
        <dbReference type="ChEBI" id="CHEBI:58223"/>
        <dbReference type="ChEBI" id="CHEBI:58885"/>
        <dbReference type="EC" id="2.4.1.80"/>
    </reaction>
    <physiologicalReaction direction="left-to-right" evidence="8">
        <dbReference type="Rhea" id="RHEA:12089"/>
    </physiologicalReaction>
</comment>
<comment type="catalytic activity">
    <reaction evidence="7">
        <text>UDP-alpha-D-xylose + an N-acylsphing-4-enine = a beta-D-xylosyl-(1&lt;-&gt;1')-N-acylsphing-4-enine + UDP + H(+)</text>
        <dbReference type="Rhea" id="RHEA:70243"/>
        <dbReference type="ChEBI" id="CHEBI:15378"/>
        <dbReference type="ChEBI" id="CHEBI:52639"/>
        <dbReference type="ChEBI" id="CHEBI:57632"/>
        <dbReference type="ChEBI" id="CHEBI:58223"/>
        <dbReference type="ChEBI" id="CHEBI:189068"/>
    </reaction>
    <physiologicalReaction direction="left-to-right" evidence="7">
        <dbReference type="Rhea" id="RHEA:70244"/>
    </physiologicalReaction>
</comment>
<comment type="catalytic activity">
    <reaction evidence="7">
        <text>N-(9Z-octadecenoyl)-sphing-4-enine + UDP-alpha-D-xylose = beta-D-xylosyl-(1&lt;-&gt;1')-N-(9Z-octadecenoyl)-sphing-4-enine + UDP + H(+)</text>
        <dbReference type="Rhea" id="RHEA:70247"/>
        <dbReference type="ChEBI" id="CHEBI:15378"/>
        <dbReference type="ChEBI" id="CHEBI:57632"/>
        <dbReference type="ChEBI" id="CHEBI:58223"/>
        <dbReference type="ChEBI" id="CHEBI:77996"/>
        <dbReference type="ChEBI" id="CHEBI:189081"/>
    </reaction>
    <physiologicalReaction direction="left-to-right" evidence="7">
        <dbReference type="Rhea" id="RHEA:70248"/>
    </physiologicalReaction>
</comment>
<comment type="pathway">
    <text evidence="13 14">Lipid metabolism; sphingolipid metabolism.</text>
</comment>
<comment type="subunit">
    <text evidence="5">Interacts with RTN1; regulates the ceramide glucosyltransferase activity of UGCG.</text>
</comment>
<comment type="subcellular location">
    <subcellularLocation>
        <location evidence="5">Golgi apparatus membrane</location>
        <topology evidence="3">Multi-pass membrane protein</topology>
    </subcellularLocation>
</comment>
<comment type="tissue specificity">
    <text evidence="8">Found in all tissues examined.</text>
</comment>
<comment type="developmental stage">
    <text evidence="9">Up-regulated during keratinocyte differentiation.</text>
</comment>
<comment type="domain">
    <text evidence="3">The D1, D2, D3, (Q/R)XXRW motif is a critical part of the GCS active site, involved in catalysis and UDP-sugar binding.</text>
</comment>
<comment type="similarity">
    <text evidence="12">Belongs to the glycosyltransferase 2 family.</text>
</comment>
<organism>
    <name type="scientific">Homo sapiens</name>
    <name type="common">Human</name>
    <dbReference type="NCBI Taxonomy" id="9606"/>
    <lineage>
        <taxon>Eukaryota</taxon>
        <taxon>Metazoa</taxon>
        <taxon>Chordata</taxon>
        <taxon>Craniata</taxon>
        <taxon>Vertebrata</taxon>
        <taxon>Euteleostomi</taxon>
        <taxon>Mammalia</taxon>
        <taxon>Eutheria</taxon>
        <taxon>Euarchontoglires</taxon>
        <taxon>Primates</taxon>
        <taxon>Haplorrhini</taxon>
        <taxon>Catarrhini</taxon>
        <taxon>Hominidae</taxon>
        <taxon>Homo</taxon>
    </lineage>
</organism>
<dbReference type="EC" id="2.4.1.80" evidence="8"/>
<dbReference type="EMBL" id="D50840">
    <property type="protein sequence ID" value="BAA09451.1"/>
    <property type="molecule type" value="mRNA"/>
</dbReference>
<dbReference type="EMBL" id="AK314847">
    <property type="protein sequence ID" value="BAG37364.1"/>
    <property type="molecule type" value="mRNA"/>
</dbReference>
<dbReference type="EMBL" id="AL442066">
    <property type="status" value="NOT_ANNOTATED_CDS"/>
    <property type="molecule type" value="Genomic_DNA"/>
</dbReference>
<dbReference type="EMBL" id="CH471105">
    <property type="protein sequence ID" value="EAW59091.1"/>
    <property type="molecule type" value="Genomic_DNA"/>
</dbReference>
<dbReference type="EMBL" id="BC038711">
    <property type="protein sequence ID" value="AAH38711.1"/>
    <property type="molecule type" value="mRNA"/>
</dbReference>
<dbReference type="CCDS" id="CCDS6782.1"/>
<dbReference type="RefSeq" id="NP_003349.1">
    <property type="nucleotide sequence ID" value="NM_003358.3"/>
</dbReference>
<dbReference type="SMR" id="Q16739"/>
<dbReference type="BioGRID" id="113204">
    <property type="interactions" value="39"/>
</dbReference>
<dbReference type="CORUM" id="Q16739"/>
<dbReference type="FunCoup" id="Q16739">
    <property type="interactions" value="670"/>
</dbReference>
<dbReference type="IntAct" id="Q16739">
    <property type="interactions" value="23"/>
</dbReference>
<dbReference type="MINT" id="Q16739"/>
<dbReference type="STRING" id="9606.ENSP00000363397"/>
<dbReference type="BindingDB" id="Q16739"/>
<dbReference type="ChEMBL" id="CHEMBL2063"/>
<dbReference type="DrugBank" id="DB09039">
    <property type="generic name" value="Eliglustat"/>
</dbReference>
<dbReference type="DrugBank" id="DB00419">
    <property type="generic name" value="Miglustat"/>
</dbReference>
<dbReference type="DrugBank" id="DB14966">
    <property type="generic name" value="Venglustat"/>
</dbReference>
<dbReference type="DrugCentral" id="Q16739"/>
<dbReference type="GuidetoPHARMACOLOGY" id="2528"/>
<dbReference type="SwissLipids" id="SLP:000000674"/>
<dbReference type="SwissLipids" id="SLP:000000675"/>
<dbReference type="CAZy" id="GT21">
    <property type="family name" value="Glycosyltransferase Family 21"/>
</dbReference>
<dbReference type="TCDB" id="4.D.1.4.1">
    <property type="family name" value="the putative vectorial glycosyl polymerization (vgp) family"/>
</dbReference>
<dbReference type="GlyGen" id="Q16739">
    <property type="glycosylation" value="4 sites, 1 N-linked glycan (1 site)"/>
</dbReference>
<dbReference type="iPTMnet" id="Q16739"/>
<dbReference type="PhosphoSitePlus" id="Q16739"/>
<dbReference type="SwissPalm" id="Q16739"/>
<dbReference type="BioMuta" id="UGCG"/>
<dbReference type="DMDM" id="2498228"/>
<dbReference type="jPOST" id="Q16739"/>
<dbReference type="MassIVE" id="Q16739"/>
<dbReference type="PaxDb" id="9606-ENSP00000363397"/>
<dbReference type="PeptideAtlas" id="Q16739"/>
<dbReference type="ProteomicsDB" id="61050"/>
<dbReference type="Pumba" id="Q16739"/>
<dbReference type="Antibodypedia" id="15178">
    <property type="antibodies" value="194 antibodies from 30 providers"/>
</dbReference>
<dbReference type="DNASU" id="7357"/>
<dbReference type="Ensembl" id="ENST00000374279.4">
    <property type="protein sequence ID" value="ENSP00000363397.3"/>
    <property type="gene ID" value="ENSG00000148154.10"/>
</dbReference>
<dbReference type="GeneID" id="7357"/>
<dbReference type="KEGG" id="hsa:7357"/>
<dbReference type="MANE-Select" id="ENST00000374279.4">
    <property type="protein sequence ID" value="ENSP00000363397.3"/>
    <property type="RefSeq nucleotide sequence ID" value="NM_003358.3"/>
    <property type="RefSeq protein sequence ID" value="NP_003349.1"/>
</dbReference>
<dbReference type="UCSC" id="uc004bft.4">
    <property type="organism name" value="human"/>
</dbReference>
<dbReference type="AGR" id="HGNC:12524"/>
<dbReference type="CTD" id="7357"/>
<dbReference type="DisGeNET" id="7357"/>
<dbReference type="GeneCards" id="UGCG"/>
<dbReference type="HGNC" id="HGNC:12524">
    <property type="gene designation" value="UGCG"/>
</dbReference>
<dbReference type="HPA" id="ENSG00000148154">
    <property type="expression patterns" value="Tissue enhanced (bone)"/>
</dbReference>
<dbReference type="MIM" id="602874">
    <property type="type" value="gene"/>
</dbReference>
<dbReference type="neXtProt" id="NX_Q16739"/>
<dbReference type="OpenTargets" id="ENSG00000148154"/>
<dbReference type="PharmGKB" id="PA37169"/>
<dbReference type="VEuPathDB" id="HostDB:ENSG00000148154"/>
<dbReference type="eggNOG" id="KOG2547">
    <property type="taxonomic scope" value="Eukaryota"/>
</dbReference>
<dbReference type="GeneTree" id="ENSGT00390000012898"/>
<dbReference type="HOGENOM" id="CLU_030898_0_0_1"/>
<dbReference type="InParanoid" id="Q16739"/>
<dbReference type="OMA" id="IVWIIDC"/>
<dbReference type="OrthoDB" id="1483400at2759"/>
<dbReference type="PAN-GO" id="Q16739">
    <property type="GO annotations" value="3 GO annotations based on evolutionary models"/>
</dbReference>
<dbReference type="PhylomeDB" id="Q16739"/>
<dbReference type="TreeFam" id="TF314564"/>
<dbReference type="BioCyc" id="MetaCyc:HS07494-MONOMER"/>
<dbReference type="BRENDA" id="2.4.1.80">
    <property type="organism ID" value="2681"/>
</dbReference>
<dbReference type="PathwayCommons" id="Q16739"/>
<dbReference type="Reactome" id="R-HSA-9840309">
    <property type="pathway name" value="Glycosphingolipid biosynthesis"/>
</dbReference>
<dbReference type="SignaLink" id="Q16739"/>
<dbReference type="SIGNOR" id="Q16739"/>
<dbReference type="UniPathway" id="UPA00222"/>
<dbReference type="BioGRID-ORCS" id="7357">
    <property type="hits" value="57 hits in 1176 CRISPR screens"/>
</dbReference>
<dbReference type="ChiTaRS" id="UGCG">
    <property type="organism name" value="human"/>
</dbReference>
<dbReference type="GeneWiki" id="UGCG"/>
<dbReference type="GenomeRNAi" id="7357"/>
<dbReference type="Pharos" id="Q16739">
    <property type="development level" value="Tclin"/>
</dbReference>
<dbReference type="PRO" id="PR:Q16739"/>
<dbReference type="Proteomes" id="UP000005640">
    <property type="component" value="Chromosome 9"/>
</dbReference>
<dbReference type="RNAct" id="Q16739">
    <property type="molecule type" value="protein"/>
</dbReference>
<dbReference type="Bgee" id="ENSG00000148154">
    <property type="expression patterns" value="Expressed in upper leg skin and 187 other cell types or tissues"/>
</dbReference>
<dbReference type="ExpressionAtlas" id="Q16739">
    <property type="expression patterns" value="baseline and differential"/>
</dbReference>
<dbReference type="GO" id="GO:0000139">
    <property type="term" value="C:Golgi membrane"/>
    <property type="evidence" value="ECO:0000314"/>
    <property type="project" value="UniProtKB"/>
</dbReference>
<dbReference type="GO" id="GO:0016020">
    <property type="term" value="C:membrane"/>
    <property type="evidence" value="ECO:0000318"/>
    <property type="project" value="GO_Central"/>
</dbReference>
<dbReference type="GO" id="GO:0008120">
    <property type="term" value="F:ceramide glucosyltransferase activity"/>
    <property type="evidence" value="ECO:0000314"/>
    <property type="project" value="UniProtKB"/>
</dbReference>
<dbReference type="GO" id="GO:0030154">
    <property type="term" value="P:cell differentiation"/>
    <property type="evidence" value="ECO:0000250"/>
    <property type="project" value="UniProtKB"/>
</dbReference>
<dbReference type="GO" id="GO:1903575">
    <property type="term" value="P:cornified envelope assembly"/>
    <property type="evidence" value="ECO:0000250"/>
    <property type="project" value="UniProtKB"/>
</dbReference>
<dbReference type="GO" id="GO:0008544">
    <property type="term" value="P:epidermis development"/>
    <property type="evidence" value="ECO:0000304"/>
    <property type="project" value="ProtInc"/>
</dbReference>
<dbReference type="GO" id="GO:0061436">
    <property type="term" value="P:establishment of skin barrier"/>
    <property type="evidence" value="ECO:0000250"/>
    <property type="project" value="UniProtKB"/>
</dbReference>
<dbReference type="GO" id="GO:0006679">
    <property type="term" value="P:glucosylceramide biosynthetic process"/>
    <property type="evidence" value="ECO:0000314"/>
    <property type="project" value="UniProtKB"/>
</dbReference>
<dbReference type="GO" id="GO:0006688">
    <property type="term" value="P:glycosphingolipid biosynthetic process"/>
    <property type="evidence" value="ECO:0000304"/>
    <property type="project" value="Reactome"/>
</dbReference>
<dbReference type="GO" id="GO:0098856">
    <property type="term" value="P:intestinal lipid absorption"/>
    <property type="evidence" value="ECO:0000250"/>
    <property type="project" value="UniProtKB"/>
</dbReference>
<dbReference type="GO" id="GO:0030216">
    <property type="term" value="P:keratinocyte differentiation"/>
    <property type="evidence" value="ECO:0000250"/>
    <property type="project" value="UniProtKB"/>
</dbReference>
<dbReference type="GO" id="GO:0033210">
    <property type="term" value="P:leptin-mediated signaling pathway"/>
    <property type="evidence" value="ECO:0000250"/>
    <property type="project" value="UniProtKB"/>
</dbReference>
<dbReference type="GO" id="GO:0048666">
    <property type="term" value="P:neuron development"/>
    <property type="evidence" value="ECO:0000250"/>
    <property type="project" value="UniProtKB"/>
</dbReference>
<dbReference type="GO" id="GO:0006497">
    <property type="term" value="P:protein lipidation"/>
    <property type="evidence" value="ECO:0000250"/>
    <property type="project" value="UniProtKB"/>
</dbReference>
<dbReference type="GO" id="GO:0009966">
    <property type="term" value="P:regulation of signal transduction"/>
    <property type="evidence" value="ECO:0000250"/>
    <property type="project" value="UniProtKB"/>
</dbReference>
<dbReference type="CDD" id="cd02520">
    <property type="entry name" value="Glucosylceramide_synthase"/>
    <property type="match status" value="1"/>
</dbReference>
<dbReference type="FunFam" id="3.90.550.10:FF:000041">
    <property type="entry name" value="UDP-glucose ceramide glucosyltransferase"/>
    <property type="match status" value="1"/>
</dbReference>
<dbReference type="Gene3D" id="3.90.550.10">
    <property type="entry name" value="Spore Coat Polysaccharide Biosynthesis Protein SpsA, Chain A"/>
    <property type="match status" value="1"/>
</dbReference>
<dbReference type="InterPro" id="IPR025993">
    <property type="entry name" value="Ceramide_glucosylTrfase"/>
</dbReference>
<dbReference type="InterPro" id="IPR029044">
    <property type="entry name" value="Nucleotide-diphossugar_trans"/>
</dbReference>
<dbReference type="PANTHER" id="PTHR12726">
    <property type="entry name" value="CERAMIDE GLUCOSYLTRANSFERASE"/>
    <property type="match status" value="1"/>
</dbReference>
<dbReference type="PANTHER" id="PTHR12726:SF0">
    <property type="entry name" value="CERAMIDE GLUCOSYLTRANSFERASE"/>
    <property type="match status" value="1"/>
</dbReference>
<dbReference type="Pfam" id="PF13506">
    <property type="entry name" value="Glyco_transf_21"/>
    <property type="match status" value="1"/>
</dbReference>
<dbReference type="SUPFAM" id="SSF53448">
    <property type="entry name" value="Nucleotide-diphospho-sugar transferases"/>
    <property type="match status" value="1"/>
</dbReference>
<feature type="chain" id="PRO_0000059176" description="Ceramide glucosyltransferase">
    <location>
        <begin position="1"/>
        <end position="394"/>
    </location>
</feature>
<feature type="topological domain" description="Lumenal" evidence="4">
    <location>
        <begin position="1"/>
        <end position="10"/>
    </location>
</feature>
<feature type="transmembrane region" description="Helical" evidence="4">
    <location>
        <begin position="11"/>
        <end position="32"/>
    </location>
</feature>
<feature type="topological domain" description="Cytoplasmic" evidence="4">
    <location>
        <begin position="33"/>
        <end position="195"/>
    </location>
</feature>
<feature type="transmembrane region" description="Helical" evidence="4">
    <location>
        <begin position="196"/>
        <end position="215"/>
    </location>
</feature>
<feature type="topological domain" description="Lumenal" evidence="4">
    <location>
        <begin position="216"/>
        <end position="287"/>
    </location>
</feature>
<feature type="transmembrane region" description="Helical" evidence="4">
    <location>
        <begin position="288"/>
        <end position="304"/>
    </location>
</feature>
<feature type="topological domain" description="Cytoplasmic" evidence="4">
    <location>
        <begin position="305"/>
        <end position="309"/>
    </location>
</feature>
<feature type="transmembrane region" description="Helical" evidence="4">
    <location>
        <begin position="310"/>
        <end position="328"/>
    </location>
</feature>
<feature type="topological domain" description="Lumenal" evidence="4">
    <location>
        <begin position="329"/>
        <end position="348"/>
    </location>
</feature>
<feature type="transmembrane region" description="Helical" evidence="4">
    <location>
        <begin position="349"/>
        <end position="369"/>
    </location>
</feature>
<feature type="topological domain" description="Cytoplasmic" evidence="12">
    <location>
        <begin position="370"/>
        <end position="394"/>
    </location>
</feature>
<feature type="short sequence motif" description="D1" evidence="12">
    <location>
        <position position="92"/>
    </location>
</feature>
<feature type="short sequence motif" description="D2" evidence="12">
    <location>
        <position position="144"/>
    </location>
</feature>
<feature type="short sequence motif" description="D3" evidence="12">
    <location>
        <position position="236"/>
    </location>
</feature>
<feature type="short sequence motif" description="(Q/R)XXRW" evidence="12">
    <location>
        <begin position="272"/>
        <end position="276"/>
    </location>
</feature>
<feature type="active site" description="Proton acceptor" evidence="3">
    <location>
        <position position="236"/>
    </location>
</feature>
<feature type="site" description="May play an important role in binding to the inhibitors DEPC and PDMP" evidence="1">
    <location>
        <position position="193"/>
    </location>
</feature>
<feature type="modified residue" description="N6-acetyllysine" evidence="2">
    <location>
        <position position="117"/>
    </location>
</feature>
<protein>
    <recommendedName>
        <fullName evidence="12">Ceramide glucosyltransferase</fullName>
        <ecNumber evidence="8">2.4.1.80</ecNumber>
    </recommendedName>
    <alternativeName>
        <fullName>GLCT-1</fullName>
    </alternativeName>
    <alternativeName>
        <fullName>Glucosylceramide synthase</fullName>
        <shortName evidence="10">GCS</shortName>
    </alternativeName>
    <alternativeName>
        <fullName evidence="12">Glycosylceramide synthase</fullName>
    </alternativeName>
    <alternativeName>
        <fullName>UDP-glucose ceramide glucosyltransferase</fullName>
    </alternativeName>
    <alternativeName>
        <fullName>UDP-glucose:N-acylsphingosine D-glucosyltransferase</fullName>
    </alternativeName>
</protein>
<sequence>MALLDLALEGMAVFGFVLFLVLWLMHFMAIIYTRLHLNKKATDKQPYSKLPGVSLLKPLKGVDPNLINNLETFFELDYPKYEVLLCVQDHDDPAIDVCKKLLGKYPNVDARLFIGGKKVGINPKINNLMPGYEVAKYDLIWICDSGIRVIPDTLTDMVNQMTEKVGLVHGLPYVADRQGFAATLEQVYFGTSHPRYYISANVTGFKCVTGMSCLMRKDVLDQAGGLIAFAQYIAEDYFMAKAIADRGWRFAMSTQVAMQNSGSYSISQFQSRMIRWTKLRINMLPATIICEPISECFVASLIIGWAAHHVFRWDIMVFFMCHCLAWFIFDYIQLRGVQGGTLCFSKLDYAVAWFIRESMTIYIFLSALWDPTISWRTGRYRLRCGGTAEEILDV</sequence>
<proteinExistence type="evidence at protein level"/>
<evidence type="ECO:0000250" key="1"/>
<evidence type="ECO:0000250" key="2">
    <source>
        <dbReference type="UniProtKB" id="O88693"/>
    </source>
</evidence>
<evidence type="ECO:0000250" key="3">
    <source>
        <dbReference type="UniProtKB" id="Q9R0E0"/>
    </source>
</evidence>
<evidence type="ECO:0000255" key="4"/>
<evidence type="ECO:0000269" key="5">
    <source>
    </source>
</evidence>
<evidence type="ECO:0000269" key="6">
    <source>
    </source>
</evidence>
<evidence type="ECO:0000269" key="7">
    <source>
    </source>
</evidence>
<evidence type="ECO:0000269" key="8">
    <source>
    </source>
</evidence>
<evidence type="ECO:0000269" key="9">
    <source>
    </source>
</evidence>
<evidence type="ECO:0000303" key="10">
    <source>
    </source>
</evidence>
<evidence type="ECO:0000303" key="11">
    <source>
    </source>
</evidence>
<evidence type="ECO:0000305" key="12"/>
<evidence type="ECO:0000305" key="13">
    <source>
    </source>
</evidence>
<evidence type="ECO:0000305" key="14">
    <source>
    </source>
</evidence>
<evidence type="ECO:0000312" key="15">
    <source>
        <dbReference type="HGNC" id="HGNC:12524"/>
    </source>
</evidence>
<reference key="1">
    <citation type="journal article" date="1996" name="Proc. Natl. Acad. Sci. U.S.A.">
        <title>Expression cloning of a cDNA for human ceramide glucosyltransferase that catalyzes the first glycosylation step of glycosphingolipid synthesis.</title>
        <authorList>
            <person name="Ichikawa S."/>
            <person name="Sakiyama H."/>
            <person name="Suzuki G."/>
            <person name="Hidari K.I.-P."/>
            <person name="Hirabayashi Y."/>
        </authorList>
    </citation>
    <scope>NUCLEOTIDE SEQUENCE [MRNA]</scope>
    <scope>FUNCTION</scope>
    <scope>CATALYTIC ACTIVITY</scope>
    <scope>PATHWAY</scope>
    <scope>TISSUE SPECIFICITY</scope>
    <source>
        <tissue>Melanoma</tissue>
    </source>
</reference>
<reference key="2">
    <citation type="journal article" date="1996" name="Proc. Natl. Acad. Sci. U.S.A.">
        <authorList>
            <person name="Ichikawa S."/>
            <person name="Sakiyama H."/>
            <person name="Suzuki G."/>
            <person name="Hidari K.I.-P."/>
            <person name="Hirabayashi Y."/>
        </authorList>
    </citation>
    <scope>ERRATUM OF PUBMED:8643456</scope>
</reference>
<reference key="3">
    <citation type="journal article" date="2004" name="Nat. Genet.">
        <title>Complete sequencing and characterization of 21,243 full-length human cDNAs.</title>
        <authorList>
            <person name="Ota T."/>
            <person name="Suzuki Y."/>
            <person name="Nishikawa T."/>
            <person name="Otsuki T."/>
            <person name="Sugiyama T."/>
            <person name="Irie R."/>
            <person name="Wakamatsu A."/>
            <person name="Hayashi K."/>
            <person name="Sato H."/>
            <person name="Nagai K."/>
            <person name="Kimura K."/>
            <person name="Makita H."/>
            <person name="Sekine M."/>
            <person name="Obayashi M."/>
            <person name="Nishi T."/>
            <person name="Shibahara T."/>
            <person name="Tanaka T."/>
            <person name="Ishii S."/>
            <person name="Yamamoto J."/>
            <person name="Saito K."/>
            <person name="Kawai Y."/>
            <person name="Isono Y."/>
            <person name="Nakamura Y."/>
            <person name="Nagahari K."/>
            <person name="Murakami K."/>
            <person name="Yasuda T."/>
            <person name="Iwayanagi T."/>
            <person name="Wagatsuma M."/>
            <person name="Shiratori A."/>
            <person name="Sudo H."/>
            <person name="Hosoiri T."/>
            <person name="Kaku Y."/>
            <person name="Kodaira H."/>
            <person name="Kondo H."/>
            <person name="Sugawara M."/>
            <person name="Takahashi M."/>
            <person name="Kanda K."/>
            <person name="Yokoi T."/>
            <person name="Furuya T."/>
            <person name="Kikkawa E."/>
            <person name="Omura Y."/>
            <person name="Abe K."/>
            <person name="Kamihara K."/>
            <person name="Katsuta N."/>
            <person name="Sato K."/>
            <person name="Tanikawa M."/>
            <person name="Yamazaki M."/>
            <person name="Ninomiya K."/>
            <person name="Ishibashi T."/>
            <person name="Yamashita H."/>
            <person name="Murakawa K."/>
            <person name="Fujimori K."/>
            <person name="Tanai H."/>
            <person name="Kimata M."/>
            <person name="Watanabe M."/>
            <person name="Hiraoka S."/>
            <person name="Chiba Y."/>
            <person name="Ishida S."/>
            <person name="Ono Y."/>
            <person name="Takiguchi S."/>
            <person name="Watanabe S."/>
            <person name="Yosida M."/>
            <person name="Hotuta T."/>
            <person name="Kusano J."/>
            <person name="Kanehori K."/>
            <person name="Takahashi-Fujii A."/>
            <person name="Hara H."/>
            <person name="Tanase T.-O."/>
            <person name="Nomura Y."/>
            <person name="Togiya S."/>
            <person name="Komai F."/>
            <person name="Hara R."/>
            <person name="Takeuchi K."/>
            <person name="Arita M."/>
            <person name="Imose N."/>
            <person name="Musashino K."/>
            <person name="Yuuki H."/>
            <person name="Oshima A."/>
            <person name="Sasaki N."/>
            <person name="Aotsuka S."/>
            <person name="Yoshikawa Y."/>
            <person name="Matsunawa H."/>
            <person name="Ichihara T."/>
            <person name="Shiohata N."/>
            <person name="Sano S."/>
            <person name="Moriya S."/>
            <person name="Momiyama H."/>
            <person name="Satoh N."/>
            <person name="Takami S."/>
            <person name="Terashima Y."/>
            <person name="Suzuki O."/>
            <person name="Nakagawa S."/>
            <person name="Senoh A."/>
            <person name="Mizoguchi H."/>
            <person name="Goto Y."/>
            <person name="Shimizu F."/>
            <person name="Wakebe H."/>
            <person name="Hishigaki H."/>
            <person name="Watanabe T."/>
            <person name="Sugiyama A."/>
            <person name="Takemoto M."/>
            <person name="Kawakami B."/>
            <person name="Yamazaki M."/>
            <person name="Watanabe K."/>
            <person name="Kumagai A."/>
            <person name="Itakura S."/>
            <person name="Fukuzumi Y."/>
            <person name="Fujimori Y."/>
            <person name="Komiyama M."/>
            <person name="Tashiro H."/>
            <person name="Tanigami A."/>
            <person name="Fujiwara T."/>
            <person name="Ono T."/>
            <person name="Yamada K."/>
            <person name="Fujii Y."/>
            <person name="Ozaki K."/>
            <person name="Hirao M."/>
            <person name="Ohmori Y."/>
            <person name="Kawabata A."/>
            <person name="Hikiji T."/>
            <person name="Kobatake N."/>
            <person name="Inagaki H."/>
            <person name="Ikema Y."/>
            <person name="Okamoto S."/>
            <person name="Okitani R."/>
            <person name="Kawakami T."/>
            <person name="Noguchi S."/>
            <person name="Itoh T."/>
            <person name="Shigeta K."/>
            <person name="Senba T."/>
            <person name="Matsumura K."/>
            <person name="Nakajima Y."/>
            <person name="Mizuno T."/>
            <person name="Morinaga M."/>
            <person name="Sasaki M."/>
            <person name="Togashi T."/>
            <person name="Oyama M."/>
            <person name="Hata H."/>
            <person name="Watanabe M."/>
            <person name="Komatsu T."/>
            <person name="Mizushima-Sugano J."/>
            <person name="Satoh T."/>
            <person name="Shirai Y."/>
            <person name="Takahashi Y."/>
            <person name="Nakagawa K."/>
            <person name="Okumura K."/>
            <person name="Nagase T."/>
            <person name="Nomura N."/>
            <person name="Kikuchi H."/>
            <person name="Masuho Y."/>
            <person name="Yamashita R."/>
            <person name="Nakai K."/>
            <person name="Yada T."/>
            <person name="Nakamura Y."/>
            <person name="Ohara O."/>
            <person name="Isogai T."/>
            <person name="Sugano S."/>
        </authorList>
    </citation>
    <scope>NUCLEOTIDE SEQUENCE [LARGE SCALE MRNA]</scope>
    <source>
        <tissue>Trachea</tissue>
    </source>
</reference>
<reference key="4">
    <citation type="journal article" date="2004" name="Nature">
        <title>DNA sequence and analysis of human chromosome 9.</title>
        <authorList>
            <person name="Humphray S.J."/>
            <person name="Oliver K."/>
            <person name="Hunt A.R."/>
            <person name="Plumb R.W."/>
            <person name="Loveland J.E."/>
            <person name="Howe K.L."/>
            <person name="Andrews T.D."/>
            <person name="Searle S."/>
            <person name="Hunt S.E."/>
            <person name="Scott C.E."/>
            <person name="Jones M.C."/>
            <person name="Ainscough R."/>
            <person name="Almeida J.P."/>
            <person name="Ambrose K.D."/>
            <person name="Ashwell R.I.S."/>
            <person name="Babbage A.K."/>
            <person name="Babbage S."/>
            <person name="Bagguley C.L."/>
            <person name="Bailey J."/>
            <person name="Banerjee R."/>
            <person name="Barker D.J."/>
            <person name="Barlow K.F."/>
            <person name="Bates K."/>
            <person name="Beasley H."/>
            <person name="Beasley O."/>
            <person name="Bird C.P."/>
            <person name="Bray-Allen S."/>
            <person name="Brown A.J."/>
            <person name="Brown J.Y."/>
            <person name="Burford D."/>
            <person name="Burrill W."/>
            <person name="Burton J."/>
            <person name="Carder C."/>
            <person name="Carter N.P."/>
            <person name="Chapman J.C."/>
            <person name="Chen Y."/>
            <person name="Clarke G."/>
            <person name="Clark S.Y."/>
            <person name="Clee C.M."/>
            <person name="Clegg S."/>
            <person name="Collier R.E."/>
            <person name="Corby N."/>
            <person name="Crosier M."/>
            <person name="Cummings A.T."/>
            <person name="Davies J."/>
            <person name="Dhami P."/>
            <person name="Dunn M."/>
            <person name="Dutta I."/>
            <person name="Dyer L.W."/>
            <person name="Earthrowl M.E."/>
            <person name="Faulkner L."/>
            <person name="Fleming C.J."/>
            <person name="Frankish A."/>
            <person name="Frankland J.A."/>
            <person name="French L."/>
            <person name="Fricker D.G."/>
            <person name="Garner P."/>
            <person name="Garnett J."/>
            <person name="Ghori J."/>
            <person name="Gilbert J.G.R."/>
            <person name="Glison C."/>
            <person name="Grafham D.V."/>
            <person name="Gribble S."/>
            <person name="Griffiths C."/>
            <person name="Griffiths-Jones S."/>
            <person name="Grocock R."/>
            <person name="Guy J."/>
            <person name="Hall R.E."/>
            <person name="Hammond S."/>
            <person name="Harley J.L."/>
            <person name="Harrison E.S.I."/>
            <person name="Hart E.A."/>
            <person name="Heath P.D."/>
            <person name="Henderson C.D."/>
            <person name="Hopkins B.L."/>
            <person name="Howard P.J."/>
            <person name="Howden P.J."/>
            <person name="Huckle E."/>
            <person name="Johnson C."/>
            <person name="Johnson D."/>
            <person name="Joy A.A."/>
            <person name="Kay M."/>
            <person name="Keenan S."/>
            <person name="Kershaw J.K."/>
            <person name="Kimberley A.M."/>
            <person name="King A."/>
            <person name="Knights A."/>
            <person name="Laird G.K."/>
            <person name="Langford C."/>
            <person name="Lawlor S."/>
            <person name="Leongamornlert D.A."/>
            <person name="Leversha M."/>
            <person name="Lloyd C."/>
            <person name="Lloyd D.M."/>
            <person name="Lovell J."/>
            <person name="Martin S."/>
            <person name="Mashreghi-Mohammadi M."/>
            <person name="Matthews L."/>
            <person name="McLaren S."/>
            <person name="McLay K.E."/>
            <person name="McMurray A."/>
            <person name="Milne S."/>
            <person name="Nickerson T."/>
            <person name="Nisbett J."/>
            <person name="Nordsiek G."/>
            <person name="Pearce A.V."/>
            <person name="Peck A.I."/>
            <person name="Porter K.M."/>
            <person name="Pandian R."/>
            <person name="Pelan S."/>
            <person name="Phillimore B."/>
            <person name="Povey S."/>
            <person name="Ramsey Y."/>
            <person name="Rand V."/>
            <person name="Scharfe M."/>
            <person name="Sehra H.K."/>
            <person name="Shownkeen R."/>
            <person name="Sims S.K."/>
            <person name="Skuce C.D."/>
            <person name="Smith M."/>
            <person name="Steward C.A."/>
            <person name="Swarbreck D."/>
            <person name="Sycamore N."/>
            <person name="Tester J."/>
            <person name="Thorpe A."/>
            <person name="Tracey A."/>
            <person name="Tromans A."/>
            <person name="Thomas D.W."/>
            <person name="Wall M."/>
            <person name="Wallis J.M."/>
            <person name="West A.P."/>
            <person name="Whitehead S.L."/>
            <person name="Willey D.L."/>
            <person name="Williams S.A."/>
            <person name="Wilming L."/>
            <person name="Wray P.W."/>
            <person name="Young L."/>
            <person name="Ashurst J.L."/>
            <person name="Coulson A."/>
            <person name="Blocker H."/>
            <person name="Durbin R.M."/>
            <person name="Sulston J.E."/>
            <person name="Hubbard T."/>
            <person name="Jackson M.J."/>
            <person name="Bentley D.R."/>
            <person name="Beck S."/>
            <person name="Rogers J."/>
            <person name="Dunham I."/>
        </authorList>
    </citation>
    <scope>NUCLEOTIDE SEQUENCE [LARGE SCALE GENOMIC DNA]</scope>
</reference>
<reference key="5">
    <citation type="submission" date="2005-07" db="EMBL/GenBank/DDBJ databases">
        <authorList>
            <person name="Mural R.J."/>
            <person name="Istrail S."/>
            <person name="Sutton G.G."/>
            <person name="Florea L."/>
            <person name="Halpern A.L."/>
            <person name="Mobarry C.M."/>
            <person name="Lippert R."/>
            <person name="Walenz B."/>
            <person name="Shatkay H."/>
            <person name="Dew I."/>
            <person name="Miller J.R."/>
            <person name="Flanigan M.J."/>
            <person name="Edwards N.J."/>
            <person name="Bolanos R."/>
            <person name="Fasulo D."/>
            <person name="Halldorsson B.V."/>
            <person name="Hannenhalli S."/>
            <person name="Turner R."/>
            <person name="Yooseph S."/>
            <person name="Lu F."/>
            <person name="Nusskern D.R."/>
            <person name="Shue B.C."/>
            <person name="Zheng X.H."/>
            <person name="Zhong F."/>
            <person name="Delcher A.L."/>
            <person name="Huson D.H."/>
            <person name="Kravitz S.A."/>
            <person name="Mouchard L."/>
            <person name="Reinert K."/>
            <person name="Remington K.A."/>
            <person name="Clark A.G."/>
            <person name="Waterman M.S."/>
            <person name="Eichler E.E."/>
            <person name="Adams M.D."/>
            <person name="Hunkapiller M.W."/>
            <person name="Myers E.W."/>
            <person name="Venter J.C."/>
        </authorList>
    </citation>
    <scope>NUCLEOTIDE SEQUENCE [LARGE SCALE GENOMIC DNA]</scope>
</reference>
<reference key="6">
    <citation type="journal article" date="2004" name="Genome Res.">
        <title>The status, quality, and expansion of the NIH full-length cDNA project: the Mammalian Gene Collection (MGC).</title>
        <authorList>
            <consortium name="The MGC Project Team"/>
        </authorList>
    </citation>
    <scope>NUCLEOTIDE SEQUENCE [LARGE SCALE MRNA]</scope>
    <source>
        <tissue>Testis</tissue>
    </source>
</reference>
<reference key="7">
    <citation type="journal article" date="1992" name="J. Cell Biol.">
        <title>Glucosylceramide is synthesized at the cytosolic surface of various Golgi subfractions.</title>
        <authorList>
            <person name="Jeckel D."/>
            <person name="Karrenbauer A."/>
            <person name="Burger K.N."/>
            <person name="van Meer G."/>
            <person name="Wieland F."/>
        </authorList>
    </citation>
    <scope>FUNCTION</scope>
</reference>
<reference key="8">
    <citation type="journal article" date="1998" name="J. Biol. Chem.">
        <title>Up-regulation of glucosylceramide synthase expression and activity during human keratinocyte differentiation.</title>
        <authorList>
            <person name="Watanabe R."/>
            <person name="Wu K."/>
            <person name="Paul P."/>
            <person name="Marks D.L."/>
            <person name="Kobayashi T."/>
            <person name="Pittelkow M.R."/>
            <person name="Pagano R.E."/>
        </authorList>
    </citation>
    <scope>DEVELOPMENTAL STAGE</scope>
</reference>
<reference key="9">
    <citation type="journal article" date="2003" name="Cancer Res.">
        <title>Glucosylceramide synthase and its functional interaction with RTN-1C regulate chemotherapeutic-induced apoptosis in neuroepithelioma cells.</title>
        <authorList>
            <person name="Di Sano F."/>
            <person name="Fazi B."/>
            <person name="Citro G."/>
            <person name="Lovat P.E."/>
            <person name="Cesareni G."/>
            <person name="Piacentini M."/>
        </authorList>
    </citation>
    <scope>INTERACTION WITH RTN1</scope>
    <scope>SUBCELLULAR LOCATION</scope>
</reference>
<reference key="10">
    <citation type="journal article" date="2021" name="J. Lipid Res.">
        <title>Human glucocerebrosidase mediates formation of xylosyl-cholesterol by beta-xylosidase and transxylosidase reactions.</title>
        <authorList>
            <person name="Boer D.E."/>
            <person name="Mirzaian M."/>
            <person name="Ferraz M.J."/>
            <person name="Zwiers K.C."/>
            <person name="Baks M.V."/>
            <person name="Hazeu M.D."/>
            <person name="Ottenhoff R."/>
            <person name="Marques A.R.A."/>
            <person name="Meijer R."/>
            <person name="Roos J.C.P."/>
            <person name="Cox T.M."/>
            <person name="Boot R.G."/>
            <person name="Pannu N."/>
            <person name="Overkleeft H.S."/>
            <person name="Artola M."/>
            <person name="Aerts J.M."/>
        </authorList>
    </citation>
    <scope>FUNCTION</scope>
    <scope>CATALYTIC ACTIVITY</scope>
    <scope>PATHWAY</scope>
</reference>
<keyword id="KW-0007">Acetylation</keyword>
<keyword id="KW-0328">Glycosyltransferase</keyword>
<keyword id="KW-0333">Golgi apparatus</keyword>
<keyword id="KW-0444">Lipid biosynthesis</keyword>
<keyword id="KW-0443">Lipid metabolism</keyword>
<keyword id="KW-0472">Membrane</keyword>
<keyword id="KW-1267">Proteomics identification</keyword>
<keyword id="KW-1185">Reference proteome</keyword>
<keyword id="KW-0746">Sphingolipid metabolism</keyword>
<keyword id="KW-0808">Transferase</keyword>
<keyword id="KW-0812">Transmembrane</keyword>
<keyword id="KW-1133">Transmembrane helix</keyword>
<gene>
    <name evidence="15" type="primary">UGCG</name>
</gene>
<name>CEGT_HUMAN</name>